<sequence length="98" mass="10513">MKAVGAWLLCLLLLGLALQGAASRAHQHSMEIRTPDINPAWYAGRGIRPVGRFGRRRAAPGDGPRPGPRRELACIPLEGGAEPSRALLGRLTAQLVQE</sequence>
<gene>
    <name type="primary">PRLH</name>
    <name type="synonym">PRH</name>
</gene>
<protein>
    <recommendedName>
        <fullName>Prolactin-releasing peptide</fullName>
        <shortName>PrRP</shortName>
    </recommendedName>
    <alternativeName>
        <fullName>Prolactin-releasing hormone</fullName>
    </alternativeName>
    <component>
        <recommendedName>
            <fullName>Prolactin-releasing peptide PrRP31</fullName>
        </recommendedName>
    </component>
    <component>
        <recommendedName>
            <fullName>Prolactin-releasing peptide PrRP20</fullName>
        </recommendedName>
    </component>
</protein>
<accession>Q8WN12</accession>
<organism>
    <name type="scientific">Ovis aries</name>
    <name type="common">Sheep</name>
    <dbReference type="NCBI Taxonomy" id="9940"/>
    <lineage>
        <taxon>Eukaryota</taxon>
        <taxon>Metazoa</taxon>
        <taxon>Chordata</taxon>
        <taxon>Craniata</taxon>
        <taxon>Vertebrata</taxon>
        <taxon>Euteleostomi</taxon>
        <taxon>Mammalia</taxon>
        <taxon>Eutheria</taxon>
        <taxon>Laurasiatheria</taxon>
        <taxon>Artiodactyla</taxon>
        <taxon>Ruminantia</taxon>
        <taxon>Pecora</taxon>
        <taxon>Bovidae</taxon>
        <taxon>Caprinae</taxon>
        <taxon>Ovis</taxon>
    </lineage>
</organism>
<name>PRRP_SHEEP</name>
<dbReference type="EMBL" id="AF450453">
    <property type="protein sequence ID" value="AAL47178.1"/>
    <property type="molecule type" value="mRNA"/>
</dbReference>
<dbReference type="RefSeq" id="NP_001009434.1">
    <property type="nucleotide sequence ID" value="NM_001009434.2"/>
</dbReference>
<dbReference type="STRING" id="9940.ENSOARP00000020428"/>
<dbReference type="PaxDb" id="9940-ENSOARP00000020428"/>
<dbReference type="Ensembl" id="ENSOART00025012864">
    <property type="protein sequence ID" value="ENSOARP00025006395"/>
    <property type="gene ID" value="ENSOARG00025007830"/>
</dbReference>
<dbReference type="Ensembl" id="ENSOART00040040682">
    <property type="protein sequence ID" value="ENSOARP00040021096"/>
    <property type="gene ID" value="ENSOARG00040024406"/>
</dbReference>
<dbReference type="Ensembl" id="ENSOART00215010458">
    <property type="protein sequence ID" value="ENSOARP00215006129"/>
    <property type="gene ID" value="ENSOARG00215005995"/>
</dbReference>
<dbReference type="Ensembl" id="ENSOART00220013845">
    <property type="protein sequence ID" value="ENSOARP00220007988"/>
    <property type="gene ID" value="ENSOARG00220008220"/>
</dbReference>
<dbReference type="GeneID" id="443466"/>
<dbReference type="KEGG" id="oas:443466"/>
<dbReference type="CTD" id="51052"/>
<dbReference type="eggNOG" id="ENOG502S7XA">
    <property type="taxonomic scope" value="Eukaryota"/>
</dbReference>
<dbReference type="Proteomes" id="UP000002356">
    <property type="component" value="Unplaced"/>
</dbReference>
<dbReference type="GO" id="GO:0005576">
    <property type="term" value="C:extracellular region"/>
    <property type="evidence" value="ECO:0007669"/>
    <property type="project" value="UniProtKB-SubCell"/>
</dbReference>
<dbReference type="GO" id="GO:0005184">
    <property type="term" value="F:neuropeptide hormone activity"/>
    <property type="evidence" value="ECO:0007669"/>
    <property type="project" value="TreeGrafter"/>
</dbReference>
<dbReference type="GO" id="GO:0031861">
    <property type="term" value="F:prolactin-releasing peptide receptor binding"/>
    <property type="evidence" value="ECO:0007669"/>
    <property type="project" value="TreeGrafter"/>
</dbReference>
<dbReference type="GO" id="GO:0048483">
    <property type="term" value="P:autonomic nervous system development"/>
    <property type="evidence" value="ECO:0007669"/>
    <property type="project" value="Ensembl"/>
</dbReference>
<dbReference type="GO" id="GO:0042755">
    <property type="term" value="P:eating behavior"/>
    <property type="evidence" value="ECO:0007669"/>
    <property type="project" value="Ensembl"/>
</dbReference>
<dbReference type="GO" id="GO:0006112">
    <property type="term" value="P:energy reserve metabolic process"/>
    <property type="evidence" value="ECO:0007669"/>
    <property type="project" value="Ensembl"/>
</dbReference>
<dbReference type="GO" id="GO:0045444">
    <property type="term" value="P:fat cell differentiation"/>
    <property type="evidence" value="ECO:0007669"/>
    <property type="project" value="Ensembl"/>
</dbReference>
<dbReference type="GO" id="GO:0007186">
    <property type="term" value="P:G protein-coupled receptor signaling pathway"/>
    <property type="evidence" value="ECO:0007669"/>
    <property type="project" value="TreeGrafter"/>
</dbReference>
<dbReference type="GO" id="GO:0006629">
    <property type="term" value="P:lipid metabolic process"/>
    <property type="evidence" value="ECO:0007669"/>
    <property type="project" value="Ensembl"/>
</dbReference>
<dbReference type="GO" id="GO:0040014">
    <property type="term" value="P:regulation of multicellular organism growth"/>
    <property type="evidence" value="ECO:0007669"/>
    <property type="project" value="Ensembl"/>
</dbReference>
<dbReference type="GO" id="GO:0002021">
    <property type="term" value="P:response to dietary excess"/>
    <property type="evidence" value="ECO:0007669"/>
    <property type="project" value="Ensembl"/>
</dbReference>
<dbReference type="GO" id="GO:0009749">
    <property type="term" value="P:response to glucose"/>
    <property type="evidence" value="ECO:0007669"/>
    <property type="project" value="Ensembl"/>
</dbReference>
<dbReference type="GO" id="GO:0032868">
    <property type="term" value="P:response to insulin"/>
    <property type="evidence" value="ECO:0007669"/>
    <property type="project" value="Ensembl"/>
</dbReference>
<dbReference type="GO" id="GO:0001894">
    <property type="term" value="P:tissue homeostasis"/>
    <property type="evidence" value="ECO:0007669"/>
    <property type="project" value="Ensembl"/>
</dbReference>
<dbReference type="InterPro" id="IPR026194">
    <property type="entry name" value="PrRP"/>
</dbReference>
<dbReference type="PANTHER" id="PTHR17206">
    <property type="entry name" value="PROLACTIN-RELEASING PEPTIDE"/>
    <property type="match status" value="1"/>
</dbReference>
<dbReference type="PANTHER" id="PTHR17206:SF1">
    <property type="entry name" value="PROLACTIN-RELEASING PEPTIDE"/>
    <property type="match status" value="1"/>
</dbReference>
<dbReference type="Pfam" id="PF15172">
    <property type="entry name" value="Prolactin_RP"/>
    <property type="match status" value="1"/>
</dbReference>
<feature type="signal peptide" evidence="1">
    <location>
        <begin position="1"/>
        <end position="22"/>
    </location>
</feature>
<feature type="peptide" id="PRO_0000022150" description="Prolactin-releasing peptide PrRP31">
    <location>
        <begin position="23"/>
        <end position="53"/>
    </location>
</feature>
<feature type="peptide" id="PRO_0000022151" description="Prolactin-releasing peptide PrRP20">
    <location>
        <begin position="34"/>
        <end position="53"/>
    </location>
</feature>
<feature type="propeptide" id="PRO_0000022152" evidence="1">
    <location>
        <begin position="58"/>
        <end position="98"/>
    </location>
</feature>
<feature type="modified residue" description="Phenylalanine amide" evidence="1">
    <location>
        <position position="53"/>
    </location>
</feature>
<evidence type="ECO:0000250" key="1"/>
<evidence type="ECO:0000269" key="2">
    <source>
    </source>
</evidence>
<proteinExistence type="evidence at transcript level"/>
<keyword id="KW-0027">Amidation</keyword>
<keyword id="KW-0165">Cleavage on pair of basic residues</keyword>
<keyword id="KW-0372">Hormone</keyword>
<keyword id="KW-1185">Reference proteome</keyword>
<keyword id="KW-0964">Secreted</keyword>
<keyword id="KW-0732">Signal</keyword>
<comment type="function">
    <text>Stimulates prolactin (PRL) release and regulates the expression of prolactin through its receptor GPR10. May stimulate lactotrophs directly to secrete PRL.</text>
</comment>
<comment type="subcellular location">
    <subcellularLocation>
        <location>Secreted</location>
    </subcellularLocation>
</comment>
<comment type="tissue specificity">
    <text evidence="2">More abundantly expressed in the brainstem than the hypothalamus.</text>
</comment>
<reference key="1">
    <citation type="journal article" date="2002" name="J. Endocrinol.">
        <title>Prolactin-releasing peptide in the ewe: cDNA cloning, mRNA distribution and effects on prolactin secretion in vitro and in vivo.</title>
        <authorList>
            <person name="Curlewis J.D."/>
            <person name="Kusters D.H.L."/>
            <person name="Barclay J.L."/>
            <person name="Anderson S.T."/>
        </authorList>
    </citation>
    <scope>NUCLEOTIDE SEQUENCE [MRNA]</scope>
    <scope>TISSUE SPECIFICITY</scope>
</reference>